<evidence type="ECO:0000255" key="1">
    <source>
        <dbReference type="HAMAP-Rule" id="MF_01208"/>
    </source>
</evidence>
<sequence>MNLEQIYKDRGAYLEGHFLLSSGKHSQFYLQSAKVLEDPKLAAKLCDELAKIIASYKIEFDSICSPALGGILAGYELARACNKRFIFTERVNKEMTLRRGFEVKKGKKFIICEDIITTGGSALESAKTIESLGGIVVGFAALANRGFCGVENLKSPRKDNAKLPENLPLFTLGNFEFEIYDETNCPLCKKGSKAIKPGSRGN</sequence>
<reference key="1">
    <citation type="submission" date="2007-07" db="EMBL/GenBank/DDBJ databases">
        <title>Complete genome sequence of Campylobacter jejuni subsp doylei 269.97 isolated from human blood.</title>
        <authorList>
            <person name="Fouts D.E."/>
            <person name="Mongodin E.F."/>
            <person name="Puiu D."/>
            <person name="Sebastian Y."/>
            <person name="Miller W.G."/>
            <person name="Mandrell R.E."/>
            <person name="Lastovica A.J."/>
            <person name="Nelson K.E."/>
        </authorList>
    </citation>
    <scope>NUCLEOTIDE SEQUENCE [LARGE SCALE GENOMIC DNA]</scope>
    <source>
        <strain>ATCC BAA-1458 / RM4099 / 269.97</strain>
    </source>
</reference>
<dbReference type="EC" id="2.4.2.10" evidence="1"/>
<dbReference type="EMBL" id="CP000768">
    <property type="protein sequence ID" value="ABS43371.1"/>
    <property type="molecule type" value="Genomic_DNA"/>
</dbReference>
<dbReference type="SMR" id="A7H1T2"/>
<dbReference type="KEGG" id="cjd:JJD26997_0231"/>
<dbReference type="HOGENOM" id="CLU_074878_3_0_7"/>
<dbReference type="UniPathway" id="UPA00070">
    <property type="reaction ID" value="UER00119"/>
</dbReference>
<dbReference type="Proteomes" id="UP000002302">
    <property type="component" value="Chromosome"/>
</dbReference>
<dbReference type="GO" id="GO:0000287">
    <property type="term" value="F:magnesium ion binding"/>
    <property type="evidence" value="ECO:0007669"/>
    <property type="project" value="UniProtKB-UniRule"/>
</dbReference>
<dbReference type="GO" id="GO:0004588">
    <property type="term" value="F:orotate phosphoribosyltransferase activity"/>
    <property type="evidence" value="ECO:0007669"/>
    <property type="project" value="UniProtKB-UniRule"/>
</dbReference>
<dbReference type="GO" id="GO:0044205">
    <property type="term" value="P:'de novo' UMP biosynthetic process"/>
    <property type="evidence" value="ECO:0007669"/>
    <property type="project" value="UniProtKB-UniRule"/>
</dbReference>
<dbReference type="GO" id="GO:0019856">
    <property type="term" value="P:pyrimidine nucleobase biosynthetic process"/>
    <property type="evidence" value="ECO:0007669"/>
    <property type="project" value="InterPro"/>
</dbReference>
<dbReference type="CDD" id="cd06223">
    <property type="entry name" value="PRTases_typeI"/>
    <property type="match status" value="1"/>
</dbReference>
<dbReference type="Gene3D" id="3.40.50.2020">
    <property type="match status" value="1"/>
</dbReference>
<dbReference type="HAMAP" id="MF_01208">
    <property type="entry name" value="PyrE"/>
    <property type="match status" value="1"/>
</dbReference>
<dbReference type="InterPro" id="IPR023031">
    <property type="entry name" value="OPRT"/>
</dbReference>
<dbReference type="InterPro" id="IPR006273">
    <property type="entry name" value="Orotate_PRibTrfase_bac"/>
</dbReference>
<dbReference type="InterPro" id="IPR000836">
    <property type="entry name" value="PRibTrfase_dom"/>
</dbReference>
<dbReference type="InterPro" id="IPR029057">
    <property type="entry name" value="PRTase-like"/>
</dbReference>
<dbReference type="NCBIfam" id="TIGR01367">
    <property type="entry name" value="pyrE_Therm"/>
    <property type="match status" value="1"/>
</dbReference>
<dbReference type="PANTHER" id="PTHR19278">
    <property type="entry name" value="OROTATE PHOSPHORIBOSYLTRANSFERASE"/>
    <property type="match status" value="1"/>
</dbReference>
<dbReference type="PANTHER" id="PTHR19278:SF9">
    <property type="entry name" value="URIDINE 5'-MONOPHOSPHATE SYNTHASE"/>
    <property type="match status" value="1"/>
</dbReference>
<dbReference type="Pfam" id="PF00156">
    <property type="entry name" value="Pribosyltran"/>
    <property type="match status" value="1"/>
</dbReference>
<dbReference type="SUPFAM" id="SSF53271">
    <property type="entry name" value="PRTase-like"/>
    <property type="match status" value="1"/>
</dbReference>
<dbReference type="PROSITE" id="PS00103">
    <property type="entry name" value="PUR_PYR_PR_TRANSFER"/>
    <property type="match status" value="1"/>
</dbReference>
<organism>
    <name type="scientific">Campylobacter jejuni subsp. doylei (strain ATCC BAA-1458 / RM4099 / 269.97)</name>
    <dbReference type="NCBI Taxonomy" id="360109"/>
    <lineage>
        <taxon>Bacteria</taxon>
        <taxon>Pseudomonadati</taxon>
        <taxon>Campylobacterota</taxon>
        <taxon>Epsilonproteobacteria</taxon>
        <taxon>Campylobacterales</taxon>
        <taxon>Campylobacteraceae</taxon>
        <taxon>Campylobacter</taxon>
    </lineage>
</organism>
<protein>
    <recommendedName>
        <fullName evidence="1">Orotate phosphoribosyltransferase</fullName>
        <shortName evidence="1">OPRT</shortName>
        <shortName evidence="1">OPRTase</shortName>
        <ecNumber evidence="1">2.4.2.10</ecNumber>
    </recommendedName>
</protein>
<gene>
    <name evidence="1" type="primary">pyrE</name>
    <name type="ordered locus">JJD26997_0231</name>
</gene>
<comment type="function">
    <text evidence="1">Catalyzes the transfer of a ribosyl phosphate group from 5-phosphoribose 1-diphosphate to orotate, leading to the formation of orotidine monophosphate (OMP).</text>
</comment>
<comment type="catalytic activity">
    <reaction evidence="1">
        <text>orotidine 5'-phosphate + diphosphate = orotate + 5-phospho-alpha-D-ribose 1-diphosphate</text>
        <dbReference type="Rhea" id="RHEA:10380"/>
        <dbReference type="ChEBI" id="CHEBI:30839"/>
        <dbReference type="ChEBI" id="CHEBI:33019"/>
        <dbReference type="ChEBI" id="CHEBI:57538"/>
        <dbReference type="ChEBI" id="CHEBI:58017"/>
        <dbReference type="EC" id="2.4.2.10"/>
    </reaction>
</comment>
<comment type="cofactor">
    <cofactor evidence="1">
        <name>Mg(2+)</name>
        <dbReference type="ChEBI" id="CHEBI:18420"/>
    </cofactor>
</comment>
<comment type="pathway">
    <text evidence="1">Pyrimidine metabolism; UMP biosynthesis via de novo pathway; UMP from orotate: step 1/2.</text>
</comment>
<comment type="subunit">
    <text evidence="1">Homodimer.</text>
</comment>
<comment type="similarity">
    <text evidence="1">Belongs to the purine/pyrimidine phosphoribosyltransferase family. PyrE subfamily.</text>
</comment>
<accession>A7H1T2</accession>
<proteinExistence type="inferred from homology"/>
<keyword id="KW-0328">Glycosyltransferase</keyword>
<keyword id="KW-0460">Magnesium</keyword>
<keyword id="KW-0665">Pyrimidine biosynthesis</keyword>
<keyword id="KW-0808">Transferase</keyword>
<name>PYRE_CAMJD</name>
<feature type="chain" id="PRO_1000066217" description="Orotate phosphoribosyltransferase">
    <location>
        <begin position="1"/>
        <end position="202"/>
    </location>
</feature>
<feature type="binding site" evidence="1">
    <location>
        <position position="93"/>
    </location>
    <ligand>
        <name>5-phospho-alpha-D-ribose 1-diphosphate</name>
        <dbReference type="ChEBI" id="CHEBI:58017"/>
        <note>ligand shared between dimeric partners</note>
    </ligand>
</feature>
<feature type="binding site" description="in other chain" evidence="1">
    <location>
        <begin position="113"/>
        <end position="121"/>
    </location>
    <ligand>
        <name>5-phospho-alpha-D-ribose 1-diphosphate</name>
        <dbReference type="ChEBI" id="CHEBI:58017"/>
        <note>ligand shared between dimeric partners</note>
    </ligand>
</feature>
<feature type="binding site" evidence="1">
    <location>
        <position position="117"/>
    </location>
    <ligand>
        <name>orotate</name>
        <dbReference type="ChEBI" id="CHEBI:30839"/>
    </ligand>
</feature>
<feature type="binding site" evidence="1">
    <location>
        <position position="145"/>
    </location>
    <ligand>
        <name>orotate</name>
        <dbReference type="ChEBI" id="CHEBI:30839"/>
    </ligand>
</feature>